<name>IL10H_EHV2</name>
<feature type="signal peptide" evidence="2">
    <location>
        <begin position="1"/>
        <end position="18"/>
    </location>
</feature>
<feature type="chain" id="PRO_0000015376" description="Viral interleukin-10 homolog">
    <location>
        <begin position="19"/>
        <end position="179"/>
    </location>
</feature>
<feature type="glycosylation site" description="N-linked (GlcNAc...) asparagine; by host" evidence="2">
    <location>
        <position position="100"/>
    </location>
</feature>
<feature type="glycosylation site" description="N-linked (GlcNAc...) asparagine; by host" evidence="2">
    <location>
        <position position="135"/>
    </location>
</feature>
<feature type="disulfide bond" evidence="1">
    <location>
        <begin position="30"/>
        <end position="127"/>
    </location>
</feature>
<feature type="disulfide bond" evidence="1">
    <location>
        <begin position="80"/>
        <end position="133"/>
    </location>
</feature>
<organismHost>
    <name type="scientific">Equus caballus</name>
    <name type="common">Horse</name>
    <dbReference type="NCBI Taxonomy" id="9796"/>
</organismHost>
<reference key="1">
    <citation type="journal article" date="1995" name="J. Mol. Biol.">
        <title>The DNA sequence of equine herpesvirus 2.</title>
        <authorList>
            <person name="Telford E.A.R."/>
            <person name="Watson M.S."/>
            <person name="Aird H.C."/>
            <person name="Perry J."/>
            <person name="Davison A.J."/>
        </authorList>
    </citation>
    <scope>NUCLEOTIDE SEQUENCE [LARGE SCALE GENOMIC DNA]</scope>
</reference>
<protein>
    <recommendedName>
        <fullName>Viral interleukin-10 homolog</fullName>
        <shortName>vIL-10</shortName>
    </recommendedName>
</protein>
<dbReference type="EMBL" id="U20824">
    <property type="protein sequence ID" value="AAC13857.1"/>
    <property type="molecule type" value="Genomic_DNA"/>
</dbReference>
<dbReference type="PIR" id="A48558">
    <property type="entry name" value="A48558"/>
</dbReference>
<dbReference type="RefSeq" id="NP_042666.1">
    <property type="nucleotide sequence ID" value="NC_001650.2"/>
</dbReference>
<dbReference type="SMR" id="P68678"/>
<dbReference type="GeneID" id="1461021"/>
<dbReference type="KEGG" id="vg:1461021"/>
<dbReference type="Proteomes" id="UP000007083">
    <property type="component" value="Segment"/>
</dbReference>
<dbReference type="GO" id="GO:0005615">
    <property type="term" value="C:extracellular space"/>
    <property type="evidence" value="ECO:0007669"/>
    <property type="project" value="UniProtKB-KW"/>
</dbReference>
<dbReference type="GO" id="GO:0005125">
    <property type="term" value="F:cytokine activity"/>
    <property type="evidence" value="ECO:0007669"/>
    <property type="project" value="UniProtKB-KW"/>
</dbReference>
<dbReference type="GO" id="GO:0006955">
    <property type="term" value="P:immune response"/>
    <property type="evidence" value="ECO:0007669"/>
    <property type="project" value="InterPro"/>
</dbReference>
<dbReference type="GO" id="GO:0001817">
    <property type="term" value="P:regulation of cytokine production"/>
    <property type="evidence" value="ECO:0007669"/>
    <property type="project" value="UniProtKB-ARBA"/>
</dbReference>
<dbReference type="FunFam" id="1.20.1250.10:FF:000011">
    <property type="entry name" value="Interleukin-10"/>
    <property type="match status" value="1"/>
</dbReference>
<dbReference type="Gene3D" id="1.20.1250.10">
    <property type="match status" value="1"/>
</dbReference>
<dbReference type="InterPro" id="IPR009079">
    <property type="entry name" value="4_helix_cytokine-like_core"/>
</dbReference>
<dbReference type="InterPro" id="IPR000098">
    <property type="entry name" value="IL-10"/>
</dbReference>
<dbReference type="InterPro" id="IPR020443">
    <property type="entry name" value="IL-10/19/20/24/26"/>
</dbReference>
<dbReference type="InterPro" id="IPR020423">
    <property type="entry name" value="IL-10_CS"/>
</dbReference>
<dbReference type="PANTHER" id="PTHR48482:SF5">
    <property type="entry name" value="INTERLEUKIN-10"/>
    <property type="match status" value="1"/>
</dbReference>
<dbReference type="PANTHER" id="PTHR48482">
    <property type="entry name" value="INTERLEUKIN-19-RELATED"/>
    <property type="match status" value="1"/>
</dbReference>
<dbReference type="Pfam" id="PF00726">
    <property type="entry name" value="IL10"/>
    <property type="match status" value="1"/>
</dbReference>
<dbReference type="PRINTS" id="PR01294">
    <property type="entry name" value="INTRLEUKIN10"/>
</dbReference>
<dbReference type="SMART" id="SM00188">
    <property type="entry name" value="IL10"/>
    <property type="match status" value="1"/>
</dbReference>
<dbReference type="SUPFAM" id="SSF47266">
    <property type="entry name" value="4-helical cytokines"/>
    <property type="match status" value="1"/>
</dbReference>
<dbReference type="PROSITE" id="PS00520">
    <property type="entry name" value="INTERLEUKIN_10"/>
    <property type="match status" value="1"/>
</dbReference>
<organism>
    <name type="scientific">Equine herpesvirus 2 (strain 86/87)</name>
    <name type="common">EHV-2</name>
    <dbReference type="NCBI Taxonomy" id="82831"/>
    <lineage>
        <taxon>Viruses</taxon>
        <taxon>Duplodnaviria</taxon>
        <taxon>Heunggongvirae</taxon>
        <taxon>Peploviricota</taxon>
        <taxon>Herviviricetes</taxon>
        <taxon>Herpesvirales</taxon>
        <taxon>Orthoherpesviridae</taxon>
        <taxon>Gammaherpesvirinae</taxon>
        <taxon>Percavirus</taxon>
        <taxon>Percavirus equidgamma2</taxon>
        <taxon>Equid gammaherpesvirus 2</taxon>
    </lineage>
</organism>
<keyword id="KW-0202">Cytokine</keyword>
<keyword id="KW-1015">Disulfide bond</keyword>
<keyword id="KW-1125">Evasion of host immunity by viral interleukin-like protein</keyword>
<keyword id="KW-0325">Glycoprotein</keyword>
<keyword id="KW-0945">Host-virus interaction</keyword>
<keyword id="KW-1185">Reference proteome</keyword>
<keyword id="KW-0964">Secreted</keyword>
<keyword id="KW-0732">Signal</keyword>
<keyword id="KW-0899">Viral immunoevasion</keyword>
<sequence length="179" mass="20655">MFRASLLCCLVLLAGVWADNKYDSESGDDCPTLPTSLPHMLHELRAAFSRVKTFFQMKDQLDNMLLDGSLLEDFKGYLGCQALSEMIQFYLEEVMPQAENHSTDQEKDKVNSLGEKLKTLRVRLRRCHRFLPCENKSKAVEQVKSAFSKLQEKGVYKAMSEFDIFINYIEAYMTTKMKN</sequence>
<evidence type="ECO:0000250" key="1"/>
<evidence type="ECO:0000255" key="2"/>
<evidence type="ECO:0000305" key="3"/>
<comment type="function">
    <text evidence="1">Down-regulates the expression of the TAP1 gene (transporter associated with antigen processing), thereby affecting the transport of peptides into the endoplasmic reticulum and subsequent peptide loading by MHC class I molecules. In consequence, infected cells are masked for immune recognition by cytotoxic T-lymphocytes (By similarity).</text>
</comment>
<comment type="subcellular location">
    <subcellularLocation>
        <location evidence="3">Secreted</location>
    </subcellularLocation>
</comment>
<comment type="similarity">
    <text evidence="3">Belongs to the IL-10 family.</text>
</comment>
<accession>P68678</accession>
<accession>Q89451</accession>
<proteinExistence type="inferred from homology"/>
<gene>
    <name type="ORF">E7</name>
</gene>